<accession>B5YJZ3</accession>
<name>HEM1_THEYD</name>
<proteinExistence type="inferred from homology"/>
<reference key="1">
    <citation type="submission" date="2008-08" db="EMBL/GenBank/DDBJ databases">
        <title>The complete genome sequence of Thermodesulfovibrio yellowstonii strain ATCC 51303 / DSM 11347 / YP87.</title>
        <authorList>
            <person name="Dodson R.J."/>
            <person name="Durkin A.S."/>
            <person name="Wu M."/>
            <person name="Eisen J."/>
            <person name="Sutton G."/>
        </authorList>
    </citation>
    <scope>NUCLEOTIDE SEQUENCE [LARGE SCALE GENOMIC DNA]</scope>
    <source>
        <strain>ATCC 51303 / DSM 11347 / YP87</strain>
    </source>
</reference>
<gene>
    <name evidence="1" type="primary">hemA</name>
    <name type="ordered locus">THEYE_A0716</name>
</gene>
<organism>
    <name type="scientific">Thermodesulfovibrio yellowstonii (strain ATCC 51303 / DSM 11347 / YP87)</name>
    <dbReference type="NCBI Taxonomy" id="289376"/>
    <lineage>
        <taxon>Bacteria</taxon>
        <taxon>Pseudomonadati</taxon>
        <taxon>Nitrospirota</taxon>
        <taxon>Thermodesulfovibrionia</taxon>
        <taxon>Thermodesulfovibrionales</taxon>
        <taxon>Thermodesulfovibrionaceae</taxon>
        <taxon>Thermodesulfovibrio</taxon>
    </lineage>
</organism>
<comment type="function">
    <text evidence="1">Catalyzes the NADPH-dependent reduction of glutamyl-tRNA(Glu) to glutamate 1-semialdehyde (GSA).</text>
</comment>
<comment type="catalytic activity">
    <reaction evidence="1">
        <text>(S)-4-amino-5-oxopentanoate + tRNA(Glu) + NADP(+) = L-glutamyl-tRNA(Glu) + NADPH + H(+)</text>
        <dbReference type="Rhea" id="RHEA:12344"/>
        <dbReference type="Rhea" id="RHEA-COMP:9663"/>
        <dbReference type="Rhea" id="RHEA-COMP:9680"/>
        <dbReference type="ChEBI" id="CHEBI:15378"/>
        <dbReference type="ChEBI" id="CHEBI:57501"/>
        <dbReference type="ChEBI" id="CHEBI:57783"/>
        <dbReference type="ChEBI" id="CHEBI:58349"/>
        <dbReference type="ChEBI" id="CHEBI:78442"/>
        <dbReference type="ChEBI" id="CHEBI:78520"/>
        <dbReference type="EC" id="1.2.1.70"/>
    </reaction>
</comment>
<comment type="pathway">
    <text evidence="1">Porphyrin-containing compound metabolism; protoporphyrin-IX biosynthesis; 5-aminolevulinate from L-glutamyl-tRNA(Glu): step 1/2.</text>
</comment>
<comment type="subunit">
    <text evidence="1">Homodimer.</text>
</comment>
<comment type="domain">
    <text evidence="1">Possesses an unusual extended V-shaped dimeric structure with each monomer consisting of three distinct domains arranged along a curved 'spinal' alpha-helix. The N-terminal catalytic domain specifically recognizes the glutamate moiety of the substrate. The second domain is the NADPH-binding domain, and the third C-terminal domain is responsible for dimerization.</text>
</comment>
<comment type="miscellaneous">
    <text evidence="1">During catalysis, the active site Cys acts as a nucleophile attacking the alpha-carbonyl group of tRNA-bound glutamate with the formation of a thioester intermediate between enzyme and glutamate, and the concomitant release of tRNA(Glu). The thioester intermediate is finally reduced by direct hydride transfer from NADPH, to form the product GSA.</text>
</comment>
<comment type="similarity">
    <text evidence="1">Belongs to the glutamyl-tRNA reductase family.</text>
</comment>
<evidence type="ECO:0000255" key="1">
    <source>
        <dbReference type="HAMAP-Rule" id="MF_00087"/>
    </source>
</evidence>
<protein>
    <recommendedName>
        <fullName evidence="1">Glutamyl-tRNA reductase</fullName>
        <shortName evidence="1">GluTR</shortName>
        <ecNumber evidence="1">1.2.1.70</ecNumber>
    </recommendedName>
</protein>
<keyword id="KW-0521">NADP</keyword>
<keyword id="KW-0560">Oxidoreductase</keyword>
<keyword id="KW-0627">Porphyrin biosynthesis</keyword>
<keyword id="KW-1185">Reference proteome</keyword>
<sequence>MSLIVIGLNHKTAPVEIREKIAFNSKEAIKEALKELIQREGIGEVVIISTCNRVEIYVYTANVSDLKRENQVEETIKAFLSNFHNIEIGEFENYLYVYKDTEAVEHLFKVASSLDSMIVGEPQITGQVKESYEIALSERTTSLILNYLMNRALFTAKRVRNETRIGENPVSVSYAAVGLIKKVFDELSKKSILLVGAGEMAELALRHLIGSGIKNVYLTNRTFQRAEEIAKEFNGVAVPFGNLKEQLVKTDIVICSTGAPHYVITEQMLKEVMPLRKHKPIFFIDISVPRNVDPACNELDNVYLYNIDDLQDVVDSNILERKKEAEKALSIVQEETEKFFQWLNSLESVPVIVSIRNKAEQVRQEEIEKFKAKYKDLPPELINSIDYLTQSIINKIMHSPTVALKNNCENKEILIFSARRLFGLDSEEE</sequence>
<dbReference type="EC" id="1.2.1.70" evidence="1"/>
<dbReference type="EMBL" id="CP001147">
    <property type="protein sequence ID" value="ACI21817.1"/>
    <property type="molecule type" value="Genomic_DNA"/>
</dbReference>
<dbReference type="RefSeq" id="WP_012546522.1">
    <property type="nucleotide sequence ID" value="NC_011296.1"/>
</dbReference>
<dbReference type="RefSeq" id="YP_002248558.1">
    <property type="nucleotide sequence ID" value="NC_011296.1"/>
</dbReference>
<dbReference type="SMR" id="B5YJZ3"/>
<dbReference type="FunCoup" id="B5YJZ3">
    <property type="interactions" value="329"/>
</dbReference>
<dbReference type="STRING" id="289376.THEYE_A0716"/>
<dbReference type="EnsemblBacteria" id="ACI21817">
    <property type="protein sequence ID" value="ACI21817"/>
    <property type="gene ID" value="THEYE_A0716"/>
</dbReference>
<dbReference type="KEGG" id="tye:THEYE_A0716"/>
<dbReference type="PATRIC" id="fig|289376.4.peg.708"/>
<dbReference type="eggNOG" id="COG0373">
    <property type="taxonomic scope" value="Bacteria"/>
</dbReference>
<dbReference type="HOGENOM" id="CLU_035113_2_2_0"/>
<dbReference type="InParanoid" id="B5YJZ3"/>
<dbReference type="OrthoDB" id="110209at2"/>
<dbReference type="UniPathway" id="UPA00251">
    <property type="reaction ID" value="UER00316"/>
</dbReference>
<dbReference type="Proteomes" id="UP000000718">
    <property type="component" value="Chromosome"/>
</dbReference>
<dbReference type="GO" id="GO:0008883">
    <property type="term" value="F:glutamyl-tRNA reductase activity"/>
    <property type="evidence" value="ECO:0007669"/>
    <property type="project" value="UniProtKB-UniRule"/>
</dbReference>
<dbReference type="GO" id="GO:0050661">
    <property type="term" value="F:NADP binding"/>
    <property type="evidence" value="ECO:0007669"/>
    <property type="project" value="InterPro"/>
</dbReference>
<dbReference type="GO" id="GO:0006782">
    <property type="term" value="P:protoporphyrinogen IX biosynthetic process"/>
    <property type="evidence" value="ECO:0007669"/>
    <property type="project" value="UniProtKB-UniRule"/>
</dbReference>
<dbReference type="CDD" id="cd05213">
    <property type="entry name" value="NAD_bind_Glutamyl_tRNA_reduct"/>
    <property type="match status" value="1"/>
</dbReference>
<dbReference type="FunFam" id="3.30.460.30:FF:000001">
    <property type="entry name" value="Glutamyl-tRNA reductase"/>
    <property type="match status" value="1"/>
</dbReference>
<dbReference type="FunFam" id="3.40.50.720:FF:000031">
    <property type="entry name" value="Glutamyl-tRNA reductase"/>
    <property type="match status" value="1"/>
</dbReference>
<dbReference type="Gene3D" id="3.30.460.30">
    <property type="entry name" value="Glutamyl-tRNA reductase, N-terminal domain"/>
    <property type="match status" value="1"/>
</dbReference>
<dbReference type="Gene3D" id="3.40.50.720">
    <property type="entry name" value="NAD(P)-binding Rossmann-like Domain"/>
    <property type="match status" value="1"/>
</dbReference>
<dbReference type="HAMAP" id="MF_00087">
    <property type="entry name" value="Glu_tRNA_reductase"/>
    <property type="match status" value="1"/>
</dbReference>
<dbReference type="InterPro" id="IPR000343">
    <property type="entry name" value="4pyrrol_synth_GluRdtase"/>
</dbReference>
<dbReference type="InterPro" id="IPR015896">
    <property type="entry name" value="4pyrrol_synth_GluRdtase_dimer"/>
</dbReference>
<dbReference type="InterPro" id="IPR015895">
    <property type="entry name" value="4pyrrol_synth_GluRdtase_N"/>
</dbReference>
<dbReference type="InterPro" id="IPR018214">
    <property type="entry name" value="GluRdtase_CS"/>
</dbReference>
<dbReference type="InterPro" id="IPR036453">
    <property type="entry name" value="GluRdtase_dimer_dom_sf"/>
</dbReference>
<dbReference type="InterPro" id="IPR036343">
    <property type="entry name" value="GluRdtase_N_sf"/>
</dbReference>
<dbReference type="InterPro" id="IPR036291">
    <property type="entry name" value="NAD(P)-bd_dom_sf"/>
</dbReference>
<dbReference type="InterPro" id="IPR006151">
    <property type="entry name" value="Shikm_DH/Glu-tRNA_Rdtase"/>
</dbReference>
<dbReference type="NCBIfam" id="TIGR01035">
    <property type="entry name" value="hemA"/>
    <property type="match status" value="1"/>
</dbReference>
<dbReference type="PANTHER" id="PTHR43013">
    <property type="entry name" value="GLUTAMYL-TRNA REDUCTASE"/>
    <property type="match status" value="1"/>
</dbReference>
<dbReference type="PANTHER" id="PTHR43013:SF1">
    <property type="entry name" value="GLUTAMYL-TRNA REDUCTASE"/>
    <property type="match status" value="1"/>
</dbReference>
<dbReference type="Pfam" id="PF00745">
    <property type="entry name" value="GlutR_dimer"/>
    <property type="match status" value="1"/>
</dbReference>
<dbReference type="Pfam" id="PF05201">
    <property type="entry name" value="GlutR_N"/>
    <property type="match status" value="1"/>
</dbReference>
<dbReference type="Pfam" id="PF01488">
    <property type="entry name" value="Shikimate_DH"/>
    <property type="match status" value="1"/>
</dbReference>
<dbReference type="PIRSF" id="PIRSF000445">
    <property type="entry name" value="4pyrrol_synth_GluRdtase"/>
    <property type="match status" value="1"/>
</dbReference>
<dbReference type="SUPFAM" id="SSF69742">
    <property type="entry name" value="Glutamyl tRNA-reductase catalytic, N-terminal domain"/>
    <property type="match status" value="1"/>
</dbReference>
<dbReference type="SUPFAM" id="SSF69075">
    <property type="entry name" value="Glutamyl tRNA-reductase dimerization domain"/>
    <property type="match status" value="1"/>
</dbReference>
<dbReference type="SUPFAM" id="SSF51735">
    <property type="entry name" value="NAD(P)-binding Rossmann-fold domains"/>
    <property type="match status" value="1"/>
</dbReference>
<dbReference type="PROSITE" id="PS00747">
    <property type="entry name" value="GLUTR"/>
    <property type="match status" value="1"/>
</dbReference>
<feature type="chain" id="PRO_1000093176" description="Glutamyl-tRNA reductase">
    <location>
        <begin position="1"/>
        <end position="429"/>
    </location>
</feature>
<feature type="active site" description="Nucleophile" evidence="1">
    <location>
        <position position="51"/>
    </location>
</feature>
<feature type="binding site" evidence="1">
    <location>
        <begin position="50"/>
        <end position="53"/>
    </location>
    <ligand>
        <name>substrate</name>
    </ligand>
</feature>
<feature type="binding site" evidence="1">
    <location>
        <position position="116"/>
    </location>
    <ligand>
        <name>substrate</name>
    </ligand>
</feature>
<feature type="binding site" evidence="1">
    <location>
        <begin position="121"/>
        <end position="123"/>
    </location>
    <ligand>
        <name>substrate</name>
    </ligand>
</feature>
<feature type="binding site" evidence="1">
    <location>
        <position position="127"/>
    </location>
    <ligand>
        <name>substrate</name>
    </ligand>
</feature>
<feature type="binding site" evidence="1">
    <location>
        <begin position="196"/>
        <end position="201"/>
    </location>
    <ligand>
        <name>NADP(+)</name>
        <dbReference type="ChEBI" id="CHEBI:58349"/>
    </ligand>
</feature>
<feature type="site" description="Important for activity" evidence="1">
    <location>
        <position position="106"/>
    </location>
</feature>